<dbReference type="EMBL" id="CP000468">
    <property type="protein sequence ID" value="ABJ02283.1"/>
    <property type="molecule type" value="Genomic_DNA"/>
</dbReference>
<dbReference type="RefSeq" id="WP_000082183.1">
    <property type="nucleotide sequence ID" value="NZ_CADILS010000010.1"/>
</dbReference>
<dbReference type="SMR" id="A1AF43"/>
<dbReference type="KEGG" id="ecv:APECO1_3674"/>
<dbReference type="HOGENOM" id="CLU_086669_0_0_6"/>
<dbReference type="Proteomes" id="UP000008216">
    <property type="component" value="Chromosome"/>
</dbReference>
<dbReference type="GO" id="GO:0005737">
    <property type="term" value="C:cytoplasm"/>
    <property type="evidence" value="ECO:0007669"/>
    <property type="project" value="UniProtKB-SubCell"/>
</dbReference>
<dbReference type="GO" id="GO:0003677">
    <property type="term" value="F:DNA binding"/>
    <property type="evidence" value="ECO:0007669"/>
    <property type="project" value="InterPro"/>
</dbReference>
<dbReference type="GO" id="GO:0004519">
    <property type="term" value="F:endonuclease activity"/>
    <property type="evidence" value="ECO:0007669"/>
    <property type="project" value="UniProtKB-UniRule"/>
</dbReference>
<dbReference type="GO" id="GO:0006304">
    <property type="term" value="P:DNA modification"/>
    <property type="evidence" value="ECO:0007669"/>
    <property type="project" value="InterPro"/>
</dbReference>
<dbReference type="GO" id="GO:0006298">
    <property type="term" value="P:mismatch repair"/>
    <property type="evidence" value="ECO:0007669"/>
    <property type="project" value="UniProtKB-UniRule"/>
</dbReference>
<dbReference type="CDD" id="cd00583">
    <property type="entry name" value="MutH-like"/>
    <property type="match status" value="1"/>
</dbReference>
<dbReference type="FunFam" id="3.40.600.10:FF:000001">
    <property type="entry name" value="DNA mismatch repair protein MutH"/>
    <property type="match status" value="1"/>
</dbReference>
<dbReference type="Gene3D" id="3.40.600.10">
    <property type="entry name" value="DNA mismatch repair MutH/Restriction endonuclease, type II"/>
    <property type="match status" value="1"/>
</dbReference>
<dbReference type="HAMAP" id="MF_00759">
    <property type="entry name" value="MutH"/>
    <property type="match status" value="1"/>
</dbReference>
<dbReference type="InterPro" id="IPR004230">
    <property type="entry name" value="DNA_mismatch_repair_MutH"/>
</dbReference>
<dbReference type="InterPro" id="IPR011337">
    <property type="entry name" value="DNA_rep_MutH/RE_typeII_Sau3AI"/>
</dbReference>
<dbReference type="InterPro" id="IPR037057">
    <property type="entry name" value="DNA_rep_MutH/T2_RE_sf"/>
</dbReference>
<dbReference type="InterPro" id="IPR011335">
    <property type="entry name" value="Restrct_endonuc-II-like"/>
</dbReference>
<dbReference type="NCBIfam" id="TIGR02248">
    <property type="entry name" value="mutH_TIGR"/>
    <property type="match status" value="1"/>
</dbReference>
<dbReference type="NCBIfam" id="NF003458">
    <property type="entry name" value="PRK05070.1"/>
    <property type="match status" value="1"/>
</dbReference>
<dbReference type="Pfam" id="PF02976">
    <property type="entry name" value="MutH"/>
    <property type="match status" value="1"/>
</dbReference>
<dbReference type="SMART" id="SM00927">
    <property type="entry name" value="MutH"/>
    <property type="match status" value="1"/>
</dbReference>
<dbReference type="SUPFAM" id="SSF52980">
    <property type="entry name" value="Restriction endonuclease-like"/>
    <property type="match status" value="1"/>
</dbReference>
<comment type="function">
    <text evidence="1">Sequence-specific endonuclease that cleaves unmethylated GATC sequences. It is involved in DNA mismatch repair.</text>
</comment>
<comment type="subcellular location">
    <subcellularLocation>
        <location evidence="1">Cytoplasm</location>
    </subcellularLocation>
</comment>
<comment type="similarity">
    <text evidence="1">Belongs to the MutH family.</text>
</comment>
<keyword id="KW-0963">Cytoplasm</keyword>
<keyword id="KW-0227">DNA damage</keyword>
<keyword id="KW-0234">DNA repair</keyword>
<keyword id="KW-0255">Endonuclease</keyword>
<keyword id="KW-0378">Hydrolase</keyword>
<keyword id="KW-0540">Nuclease</keyword>
<keyword id="KW-1185">Reference proteome</keyword>
<evidence type="ECO:0000255" key="1">
    <source>
        <dbReference type="HAMAP-Rule" id="MF_00759"/>
    </source>
</evidence>
<feature type="chain" id="PRO_1000046694" description="DNA mismatch repair protein MutH">
    <location>
        <begin position="1"/>
        <end position="229"/>
    </location>
</feature>
<proteinExistence type="inferred from homology"/>
<protein>
    <recommendedName>
        <fullName evidence="1">DNA mismatch repair protein MutH</fullName>
    </recommendedName>
    <alternativeName>
        <fullName evidence="1">Methyl-directed mismatch repair protein</fullName>
    </alternativeName>
</protein>
<name>MUTH_ECOK1</name>
<reference key="1">
    <citation type="journal article" date="2007" name="J. Bacteriol.">
        <title>The genome sequence of avian pathogenic Escherichia coli strain O1:K1:H7 shares strong similarities with human extraintestinal pathogenic E. coli genomes.</title>
        <authorList>
            <person name="Johnson T.J."/>
            <person name="Kariyawasam S."/>
            <person name="Wannemuehler Y."/>
            <person name="Mangiamele P."/>
            <person name="Johnson S.J."/>
            <person name="Doetkott C."/>
            <person name="Skyberg J.A."/>
            <person name="Lynne A.M."/>
            <person name="Johnson J.R."/>
            <person name="Nolan L.K."/>
        </authorList>
    </citation>
    <scope>NUCLEOTIDE SEQUENCE [LARGE SCALE GENOMIC DNA]</scope>
</reference>
<organism>
    <name type="scientific">Escherichia coli O1:K1 / APEC</name>
    <dbReference type="NCBI Taxonomy" id="405955"/>
    <lineage>
        <taxon>Bacteria</taxon>
        <taxon>Pseudomonadati</taxon>
        <taxon>Pseudomonadota</taxon>
        <taxon>Gammaproteobacteria</taxon>
        <taxon>Enterobacterales</taxon>
        <taxon>Enterobacteriaceae</taxon>
        <taxon>Escherichia</taxon>
    </lineage>
</organism>
<gene>
    <name evidence="1" type="primary">mutH</name>
    <name type="ordered locus">Ecok1_27890</name>
    <name type="ORF">APECO1_3674</name>
</gene>
<sequence>MSQPRPLLSPPETEEQLLAQAQQLSGYTLGELAALAGLVTPENLKRDKGWIGVLLEIWLGASAGSKPEQDFAALGVELKTIPVDSLGRPLETTFVCVAPLTGNSGVTWETSHVRHKLKRVLWIPVEGERSIPLAKRRVGSPLLWSPNEEEDRQLREDWEELMDMIVLGQIERITARHGEYLQIRPKAANAKALTEAIGARGERILTLPRGFYLKKNFTSALLARHFLIQ</sequence>
<accession>A1AF43</accession>